<gene>
    <name evidence="6" type="primary">sidJ</name>
    <name type="ordered locus">lpg2155</name>
</gene>
<sequence>MFGFIKKVLDFFGVDQSEDNPSETAVETTDVSTKIKTTDTTQEESSVKTKTVVPTQPGGSVKPETIAPDQQKKHQIKTETTTSTTKQKGPKVTLMDGHVKQYYFARRGETSTHDTSLPPPVKVLSGRSIPLKEIPFEATRNELVQIYLTSIDKLIKSNKLNSIPSQQIASHYLFLRSLANSETDGIKKNQILSLAKPLGTYLASKEPHVWKMINELIEKSEYPIIHYLKNNRAHSNFMLALIHEYHKEPLTKNQSAFVQKFRDSSVFLFPNPIYTAWLAHSYDEDSSFNPMFRERLSTNFYHSTLTDNLLLRTEPKEVTLSSEHHYKKEKGPIDSSFRYQMSSDRLLRIQGRTLLFSTPQNDVVAVKVQKKGEPKSTLEEEFEMADYLLKHQRRLDVHSKLPQPLGQYSVKKSEILEISRGSLDFERFKTLIDDSKDLEVYVYKAPQSYFTYLHDKNQDLEDLTASVKTNVHDLFVLLREGIVFPQLADIFHTHFGEDEREDKGRYQALVQLLNVLQFQLGRIDKWQKAVEYVNLRSSGLADLGDSLPITSLFTSSDFTKHYFSELLTGGYHPTFFDKSSGTANSLFTGKRRLFGNYLYLNTIAEYLLVIQLTLGSYGDKVTRDMMDKPKKEAVWRELANVMFTSCAEAIHIMTGIPQSRALTLLKQRANIEKHFRQTQFWMTPDYSKLDEDTLQMEQYSIYSGEPEYEFTDKLVSGVGLSVDGVHQDLGGYNRESPLRELEKLLYATVTLIEGTMQLDKEFFKQLEQVEKILSGEIKTDANSCFEAVAQLLDLARPGCHFQKRLVLSYYEEAKLKYPSAPTDAYDSRFQVVARTNAAITIQRFWREARKNLSEKSDIDSEKPESERTTDKRL</sequence>
<organism>
    <name type="scientific">Legionella pneumophila subsp. pneumophila (strain Philadelphia 1 / ATCC 33152 / DSM 7513)</name>
    <dbReference type="NCBI Taxonomy" id="272624"/>
    <lineage>
        <taxon>Bacteria</taxon>
        <taxon>Pseudomonadati</taxon>
        <taxon>Pseudomonadota</taxon>
        <taxon>Gammaproteobacteria</taxon>
        <taxon>Legionellales</taxon>
        <taxon>Legionellaceae</taxon>
        <taxon>Legionella</taxon>
    </lineage>
</organism>
<feature type="chain" id="PRO_0000448404" description="Calmodulin-dependent glutamylase SidJ">
    <location>
        <begin position="1"/>
        <end position="873"/>
    </location>
</feature>
<feature type="region of interest" description="Disordered" evidence="1">
    <location>
        <begin position="16"/>
        <end position="90"/>
    </location>
</feature>
<feature type="region of interest" description="Disordered" evidence="1">
    <location>
        <begin position="851"/>
        <end position="873"/>
    </location>
</feature>
<feature type="compositionally biased region" description="Polar residues" evidence="1">
    <location>
        <begin position="22"/>
        <end position="58"/>
    </location>
</feature>
<feature type="binding site" evidence="3 7">
    <location>
        <position position="542"/>
    </location>
    <ligand>
        <name>Mg(2+)</name>
        <dbReference type="ChEBI" id="CHEBI:18420"/>
    </ligand>
</feature>
<feature type="binding site" evidence="3 7">
    <location>
        <position position="545"/>
    </location>
    <ligand>
        <name>Mg(2+)</name>
        <dbReference type="ChEBI" id="CHEBI:18420"/>
    </ligand>
</feature>
<feature type="mutagenesis site" description="Complete loss of interaction with host calmodulin; in association with A-842." evidence="5">
    <original>I</original>
    <variation>A</variation>
    <location>
        <position position="841"/>
    </location>
</feature>
<feature type="mutagenesis site" description="Complete loss of interaction with host calmodulin; in association with A-841." evidence="5">
    <original>Q</original>
    <variation>A</variation>
    <location>
        <position position="842"/>
    </location>
</feature>
<feature type="strand" evidence="10">
    <location>
        <begin position="104"/>
        <end position="109"/>
    </location>
</feature>
<feature type="strand" evidence="10">
    <location>
        <begin position="120"/>
        <end position="124"/>
    </location>
</feature>
<feature type="strand" evidence="10">
    <location>
        <begin position="127"/>
        <end position="133"/>
    </location>
</feature>
<feature type="helix" evidence="10">
    <location>
        <begin position="136"/>
        <end position="157"/>
    </location>
</feature>
<feature type="helix" evidence="10">
    <location>
        <begin position="159"/>
        <end position="162"/>
    </location>
</feature>
<feature type="helix" evidence="10">
    <location>
        <begin position="165"/>
        <end position="181"/>
    </location>
</feature>
<feature type="helix" evidence="10">
    <location>
        <begin position="185"/>
        <end position="205"/>
    </location>
</feature>
<feature type="helix" evidence="10">
    <location>
        <begin position="207"/>
        <end position="217"/>
    </location>
</feature>
<feature type="helix" evidence="10">
    <location>
        <begin position="223"/>
        <end position="227"/>
    </location>
</feature>
<feature type="strand" evidence="13">
    <location>
        <begin position="228"/>
        <end position="230"/>
    </location>
</feature>
<feature type="helix" evidence="10">
    <location>
        <begin position="231"/>
        <end position="234"/>
    </location>
</feature>
<feature type="helix" evidence="10">
    <location>
        <begin position="237"/>
        <end position="245"/>
    </location>
</feature>
<feature type="helix" evidence="10">
    <location>
        <begin position="252"/>
        <end position="260"/>
    </location>
</feature>
<feature type="turn" evidence="10">
    <location>
        <begin position="261"/>
        <end position="263"/>
    </location>
</feature>
<feature type="helix" evidence="10">
    <location>
        <begin position="265"/>
        <end position="268"/>
    </location>
</feature>
<feature type="helix" evidence="10">
    <location>
        <begin position="271"/>
        <end position="280"/>
    </location>
</feature>
<feature type="strand" evidence="9">
    <location>
        <begin position="283"/>
        <end position="285"/>
    </location>
</feature>
<feature type="strand" evidence="10">
    <location>
        <begin position="290"/>
        <end position="294"/>
    </location>
</feature>
<feature type="strand" evidence="10">
    <location>
        <begin position="297"/>
        <end position="300"/>
    </location>
</feature>
<feature type="helix" evidence="10">
    <location>
        <begin position="302"/>
        <end position="310"/>
    </location>
</feature>
<feature type="strand" evidence="10">
    <location>
        <begin position="316"/>
        <end position="320"/>
    </location>
</feature>
<feature type="turn" evidence="10">
    <location>
        <begin position="325"/>
        <end position="327"/>
    </location>
</feature>
<feature type="turn" evidence="10">
    <location>
        <begin position="343"/>
        <end position="345"/>
    </location>
</feature>
<feature type="strand" evidence="10">
    <location>
        <begin position="346"/>
        <end position="350"/>
    </location>
</feature>
<feature type="strand" evidence="10">
    <location>
        <begin position="353"/>
        <end position="357"/>
    </location>
</feature>
<feature type="strand" evidence="10">
    <location>
        <begin position="361"/>
        <end position="368"/>
    </location>
</feature>
<feature type="strand" evidence="12">
    <location>
        <begin position="370"/>
        <end position="372"/>
    </location>
</feature>
<feature type="helix" evidence="10">
    <location>
        <begin position="375"/>
        <end position="390"/>
    </location>
</feature>
<feature type="helix" evidence="10">
    <location>
        <begin position="392"/>
        <end position="395"/>
    </location>
</feature>
<feature type="strand" evidence="10">
    <location>
        <begin position="403"/>
        <end position="411"/>
    </location>
</feature>
<feature type="helix" evidence="10">
    <location>
        <begin position="412"/>
        <end position="419"/>
    </location>
</feature>
<feature type="strand" evidence="8">
    <location>
        <begin position="420"/>
        <end position="422"/>
    </location>
</feature>
<feature type="helix" evidence="10">
    <location>
        <begin position="425"/>
        <end position="431"/>
    </location>
</feature>
<feature type="strand" evidence="10">
    <location>
        <begin position="434"/>
        <end position="445"/>
    </location>
</feature>
<feature type="helix" evidence="10">
    <location>
        <begin position="447"/>
        <end position="450"/>
    </location>
</feature>
<feature type="strand" evidence="9">
    <location>
        <begin position="456"/>
        <end position="458"/>
    </location>
</feature>
<feature type="helix" evidence="10">
    <location>
        <begin position="460"/>
        <end position="479"/>
    </location>
</feature>
<feature type="strand" evidence="11">
    <location>
        <begin position="491"/>
        <end position="494"/>
    </location>
</feature>
<feature type="helix" evidence="10">
    <location>
        <begin position="497"/>
        <end position="499"/>
    </location>
</feature>
<feature type="turn" evidence="10">
    <location>
        <begin position="501"/>
        <end position="504"/>
    </location>
</feature>
<feature type="helix" evidence="10">
    <location>
        <begin position="510"/>
        <end position="513"/>
    </location>
</feature>
<feature type="strand" evidence="12">
    <location>
        <begin position="514"/>
        <end position="516"/>
    </location>
</feature>
<feature type="strand" evidence="11">
    <location>
        <begin position="523"/>
        <end position="525"/>
    </location>
</feature>
<feature type="helix" evidence="10">
    <location>
        <begin position="526"/>
        <end position="529"/>
    </location>
</feature>
<feature type="turn" evidence="10">
    <location>
        <begin position="530"/>
        <end position="532"/>
    </location>
</feature>
<feature type="strand" evidence="10">
    <location>
        <begin position="534"/>
        <end position="536"/>
    </location>
</feature>
<feature type="helix" evidence="10">
    <location>
        <begin position="549"/>
        <end position="552"/>
    </location>
</feature>
<feature type="turn" evidence="10">
    <location>
        <begin position="553"/>
        <end position="555"/>
    </location>
</feature>
<feature type="helix" evidence="10">
    <location>
        <begin position="557"/>
        <end position="562"/>
    </location>
</feature>
<feature type="helix" evidence="10">
    <location>
        <begin position="564"/>
        <end position="568"/>
    </location>
</feature>
<feature type="helix" evidence="10">
    <location>
        <begin position="573"/>
        <end position="575"/>
    </location>
</feature>
<feature type="turn" evidence="10">
    <location>
        <begin position="578"/>
        <end position="581"/>
    </location>
</feature>
<feature type="strand" evidence="10">
    <location>
        <begin position="582"/>
        <end position="586"/>
    </location>
</feature>
<feature type="helix" evidence="10">
    <location>
        <begin position="587"/>
        <end position="592"/>
    </location>
</feature>
<feature type="helix" evidence="10">
    <location>
        <begin position="594"/>
        <end position="623"/>
    </location>
</feature>
<feature type="helix" evidence="10">
    <location>
        <begin position="628"/>
        <end position="654"/>
    </location>
</feature>
<feature type="helix" evidence="10">
    <location>
        <begin position="658"/>
        <end position="668"/>
    </location>
</feature>
<feature type="helix" evidence="10">
    <location>
        <begin position="671"/>
        <end position="681"/>
    </location>
</feature>
<feature type="strand" evidence="10">
    <location>
        <begin position="682"/>
        <end position="684"/>
    </location>
</feature>
<feature type="helix" evidence="10">
    <location>
        <begin position="685"/>
        <end position="688"/>
    </location>
</feature>
<feature type="helix" evidence="10">
    <location>
        <begin position="691"/>
        <end position="702"/>
    </location>
</feature>
<feature type="strand" evidence="8">
    <location>
        <begin position="703"/>
        <end position="705"/>
    </location>
</feature>
<feature type="turn" evidence="10">
    <location>
        <begin position="716"/>
        <end position="718"/>
    </location>
</feature>
<feature type="strand" evidence="10">
    <location>
        <begin position="722"/>
        <end position="726"/>
    </location>
</feature>
<feature type="helix" evidence="10">
    <location>
        <begin position="739"/>
        <end position="774"/>
    </location>
</feature>
<feature type="strand" evidence="10">
    <location>
        <begin position="775"/>
        <end position="777"/>
    </location>
</feature>
<feature type="helix" evidence="10">
    <location>
        <begin position="781"/>
        <end position="793"/>
    </location>
</feature>
<feature type="helix" evidence="10">
    <location>
        <begin position="800"/>
        <end position="816"/>
    </location>
</feature>
<feature type="turn" evidence="10">
    <location>
        <begin position="823"/>
        <end position="825"/>
    </location>
</feature>
<feature type="helix" evidence="10">
    <location>
        <begin position="826"/>
        <end position="845"/>
    </location>
</feature>
<proteinExistence type="evidence at protein level"/>
<keyword id="KW-0002">3D-structure</keyword>
<keyword id="KW-0378">Hydrolase</keyword>
<keyword id="KW-0436">Ligase</keyword>
<keyword id="KW-0460">Magnesium</keyword>
<keyword id="KW-0479">Metal-binding</keyword>
<keyword id="KW-0511">Multifunctional enzyme</keyword>
<keyword id="KW-0520">NAD</keyword>
<keyword id="KW-0547">Nucleotide-binding</keyword>
<keyword id="KW-0645">Protease</keyword>
<keyword id="KW-1185">Reference proteome</keyword>
<keyword id="KW-0788">Thiol protease</keyword>
<keyword id="KW-0808">Transferase</keyword>
<keyword id="KW-0843">Virulence</keyword>
<comment type="function">
    <text evidence="2 3 4 5">Glutamylase that mediates the covalent attachment of glutamate moieties to SdeA on one of the catalytic residues that is required for its mono-ADP-ribosyltransferase activity (PubMed:31330531, PubMed:31330532). In turn, inhibits SdeA ubiquitinating activity. Also glutamylates related SdeB, SdeC and SidE (PubMed:31123136, PubMed:31330531). Glutamylase activity only occurs in the host since it requires host calmodulin (PubMed:28497808, PubMed:31123136, PubMed:31330531, PubMed:31330532). May also reverse the SdeA-mediated substrate ubiquitination by cleaving the phosphodiester bond that links phosphoribosylated ubiquitin to protein substrates via its deubiquitinase activity (PubMed:28497808).</text>
</comment>
<comment type="catalytic activity">
    <reaction evidence="3 4 5">
        <text>L-glutamyl-[protein] + L-glutamate + ATP = gamma-L-glutamyl-L-glutamyl-[protein] + ADP + phosphate + H(+)</text>
        <dbReference type="Rhea" id="RHEA:60144"/>
        <dbReference type="Rhea" id="RHEA-COMP:10208"/>
        <dbReference type="Rhea" id="RHEA-COMP:15517"/>
        <dbReference type="ChEBI" id="CHEBI:15378"/>
        <dbReference type="ChEBI" id="CHEBI:29973"/>
        <dbReference type="ChEBI" id="CHEBI:29985"/>
        <dbReference type="ChEBI" id="CHEBI:30616"/>
        <dbReference type="ChEBI" id="CHEBI:43474"/>
        <dbReference type="ChEBI" id="CHEBI:143622"/>
        <dbReference type="ChEBI" id="CHEBI:456216"/>
    </reaction>
</comment>
<comment type="catalytic activity">
    <reaction evidence="3 4 5">
        <text>(L-glutamyl)(n)-gamma-L-glutamyl-L-glutamyl-[protein] + L-glutamate + ATP = (L-glutamyl)(n+1)-gamma-L-glutamyl-L-glutamyl-[protein] + ADP + phosphate + H(+)</text>
        <dbReference type="Rhea" id="RHEA:60148"/>
        <dbReference type="Rhea" id="RHEA-COMP:15519"/>
        <dbReference type="Rhea" id="RHEA-COMP:15675"/>
        <dbReference type="ChEBI" id="CHEBI:15378"/>
        <dbReference type="ChEBI" id="CHEBI:29985"/>
        <dbReference type="ChEBI" id="CHEBI:30616"/>
        <dbReference type="ChEBI" id="CHEBI:43474"/>
        <dbReference type="ChEBI" id="CHEBI:143623"/>
        <dbReference type="ChEBI" id="CHEBI:456216"/>
    </reaction>
</comment>
<comment type="cofactor">
    <cofactor evidence="3">
        <name>Mg(2+)</name>
        <dbReference type="ChEBI" id="CHEBI:18420"/>
    </cofactor>
</comment>
<comment type="activity regulation">
    <text evidence="3 4">Glytamylation catalyzed by SidJ requires host calmodulin and can be regulated by intracellular changes in Ca2+ concentrations. Also requires ATP.</text>
</comment>
<comment type="subunit">
    <text evidence="3 4 5">Interacts with host calmodulin/CALM1; this interaction is required for glutamylase activity.</text>
</comment>
<evidence type="ECO:0000256" key="1">
    <source>
        <dbReference type="SAM" id="MobiDB-lite"/>
    </source>
</evidence>
<evidence type="ECO:0000269" key="2">
    <source>
    </source>
</evidence>
<evidence type="ECO:0000269" key="3">
    <source>
    </source>
</evidence>
<evidence type="ECO:0000269" key="4">
    <source>
    </source>
</evidence>
<evidence type="ECO:0000269" key="5">
    <source>
    </source>
</evidence>
<evidence type="ECO:0000303" key="6">
    <source>
    </source>
</evidence>
<evidence type="ECO:0007744" key="7">
    <source>
        <dbReference type="PDB" id="6OQQ"/>
    </source>
</evidence>
<evidence type="ECO:0007829" key="8">
    <source>
        <dbReference type="PDB" id="6K4K"/>
    </source>
</evidence>
<evidence type="ECO:0007829" key="9">
    <source>
        <dbReference type="PDB" id="6K4L"/>
    </source>
</evidence>
<evidence type="ECO:0007829" key="10">
    <source>
        <dbReference type="PDB" id="6OQQ"/>
    </source>
</evidence>
<evidence type="ECO:0007829" key="11">
    <source>
        <dbReference type="PDB" id="6PLM"/>
    </source>
</evidence>
<evidence type="ECO:0007829" key="12">
    <source>
        <dbReference type="PDB" id="7MIR"/>
    </source>
</evidence>
<evidence type="ECO:0007829" key="13">
    <source>
        <dbReference type="PDB" id="7PPO"/>
    </source>
</evidence>
<dbReference type="EC" id="6.-.-.-" evidence="3 4 5"/>
<dbReference type="EMBL" id="AE017354">
    <property type="protein sequence ID" value="AAU28221.1"/>
    <property type="molecule type" value="Genomic_DNA"/>
</dbReference>
<dbReference type="RefSeq" id="WP_010947866.1">
    <property type="nucleotide sequence ID" value="NC_002942.5"/>
</dbReference>
<dbReference type="RefSeq" id="YP_096168.1">
    <property type="nucleotide sequence ID" value="NC_002942.5"/>
</dbReference>
<dbReference type="PDB" id="6K4K">
    <property type="method" value="X-ray"/>
    <property type="resolution" value="2.71 A"/>
    <property type="chains" value="A/B=1-873"/>
</dbReference>
<dbReference type="PDB" id="6K4L">
    <property type="method" value="X-ray"/>
    <property type="resolution" value="2.95 A"/>
    <property type="chains" value="A/B=1-873"/>
</dbReference>
<dbReference type="PDB" id="6K4R">
    <property type="method" value="X-ray"/>
    <property type="resolution" value="3.11 A"/>
    <property type="chains" value="A/B=1-873"/>
</dbReference>
<dbReference type="PDB" id="6OQQ">
    <property type="method" value="X-ray"/>
    <property type="resolution" value="2.10 A"/>
    <property type="chains" value="A/C=1-873"/>
</dbReference>
<dbReference type="PDB" id="6PLM">
    <property type="method" value="X-ray"/>
    <property type="resolution" value="2.59 A"/>
    <property type="chains" value="A/B=97-853"/>
</dbReference>
<dbReference type="PDB" id="6S5T">
    <property type="method" value="EM"/>
    <property type="resolution" value="4.15 A"/>
    <property type="chains" value="A=1-873"/>
</dbReference>
<dbReference type="PDB" id="7MIR">
    <property type="method" value="EM"/>
    <property type="resolution" value="2.50 A"/>
    <property type="chains" value="A=97-851"/>
</dbReference>
<dbReference type="PDB" id="7MIS">
    <property type="method" value="EM"/>
    <property type="resolution" value="2.80 A"/>
    <property type="chains" value="A=97-851"/>
</dbReference>
<dbReference type="PDB" id="7PPO">
    <property type="method" value="EM"/>
    <property type="resolution" value="2.91 A"/>
    <property type="chains" value="C=99-873"/>
</dbReference>
<dbReference type="PDB" id="7PQE">
    <property type="method" value="EM"/>
    <property type="resolution" value="3.70 A"/>
    <property type="chains" value="C=99-873"/>
</dbReference>
<dbReference type="PDBsum" id="6K4K"/>
<dbReference type="PDBsum" id="6K4L"/>
<dbReference type="PDBsum" id="6K4R"/>
<dbReference type="PDBsum" id="6OQQ"/>
<dbReference type="PDBsum" id="6PLM"/>
<dbReference type="PDBsum" id="6S5T"/>
<dbReference type="PDBsum" id="7MIR"/>
<dbReference type="PDBsum" id="7MIS"/>
<dbReference type="PDBsum" id="7PPO"/>
<dbReference type="PDBsum" id="7PQE"/>
<dbReference type="EMDB" id="EMD-10100"/>
<dbReference type="EMDB" id="EMD-13583"/>
<dbReference type="EMDB" id="EMD-13591"/>
<dbReference type="EMDB" id="EMD-23862"/>
<dbReference type="EMDB" id="EMD-23863"/>
<dbReference type="SMR" id="Q5ZTK6"/>
<dbReference type="STRING" id="272624.lpg2155"/>
<dbReference type="PaxDb" id="272624-lpg2155"/>
<dbReference type="GeneID" id="57036150"/>
<dbReference type="KEGG" id="lpn:lpg2155"/>
<dbReference type="PATRIC" id="fig|272624.6.peg.2262"/>
<dbReference type="eggNOG" id="COG1413">
    <property type="taxonomic scope" value="Bacteria"/>
</dbReference>
<dbReference type="HOGENOM" id="CLU_349104_0_0_6"/>
<dbReference type="OrthoDB" id="5649901at2"/>
<dbReference type="Proteomes" id="UP000000609">
    <property type="component" value="Chromosome"/>
</dbReference>
<dbReference type="GO" id="GO:0008234">
    <property type="term" value="F:cysteine-type peptidase activity"/>
    <property type="evidence" value="ECO:0007669"/>
    <property type="project" value="UniProtKB-KW"/>
</dbReference>
<dbReference type="GO" id="GO:0046872">
    <property type="term" value="F:metal ion binding"/>
    <property type="evidence" value="ECO:0007669"/>
    <property type="project" value="UniProtKB-KW"/>
</dbReference>
<dbReference type="GO" id="GO:0000166">
    <property type="term" value="F:nucleotide binding"/>
    <property type="evidence" value="ECO:0007669"/>
    <property type="project" value="UniProtKB-KW"/>
</dbReference>
<dbReference type="GO" id="GO:0106438">
    <property type="term" value="F:protein-glutamic acid ligase activity, elongating"/>
    <property type="evidence" value="ECO:0007669"/>
    <property type="project" value="RHEA"/>
</dbReference>
<dbReference type="GO" id="GO:0106437">
    <property type="term" value="F:protein-glutamic acid ligase activity, initiating"/>
    <property type="evidence" value="ECO:0007669"/>
    <property type="project" value="RHEA"/>
</dbReference>
<dbReference type="GO" id="GO:0016740">
    <property type="term" value="F:transferase activity"/>
    <property type="evidence" value="ECO:0007669"/>
    <property type="project" value="UniProtKB-KW"/>
</dbReference>
<dbReference type="GO" id="GO:0006508">
    <property type="term" value="P:proteolysis"/>
    <property type="evidence" value="ECO:0007669"/>
    <property type="project" value="UniProtKB-KW"/>
</dbReference>
<dbReference type="NCBIfam" id="NF033873">
    <property type="entry name" value="SidJ_poly_Glu"/>
    <property type="match status" value="1"/>
</dbReference>
<name>SIDJ_LEGPH</name>
<reference key="1">
    <citation type="journal article" date="2004" name="Science">
        <title>The genomic sequence of the accidental pathogen Legionella pneumophila.</title>
        <authorList>
            <person name="Chien M."/>
            <person name="Morozova I."/>
            <person name="Shi S."/>
            <person name="Sheng H."/>
            <person name="Chen J."/>
            <person name="Gomez S.M."/>
            <person name="Asamani G."/>
            <person name="Hill K."/>
            <person name="Nuara J."/>
            <person name="Feder M."/>
            <person name="Rineer J."/>
            <person name="Greenberg J.J."/>
            <person name="Steshenko V."/>
            <person name="Park S.H."/>
            <person name="Zhao B."/>
            <person name="Teplitskaya E."/>
            <person name="Edwards J.R."/>
            <person name="Pampou S."/>
            <person name="Georghiou A."/>
            <person name="Chou I.-C."/>
            <person name="Iannuccilli W."/>
            <person name="Ulz M.E."/>
            <person name="Kim D.H."/>
            <person name="Geringer-Sameth A."/>
            <person name="Goldsberry C."/>
            <person name="Morozov P."/>
            <person name="Fischer S.G."/>
            <person name="Segal G."/>
            <person name="Qu X."/>
            <person name="Rzhetsky A."/>
            <person name="Zhang P."/>
            <person name="Cayanis E."/>
            <person name="De Jong P.J."/>
            <person name="Ju J."/>
            <person name="Kalachikov S."/>
            <person name="Shuman H.A."/>
            <person name="Russo J.J."/>
        </authorList>
    </citation>
    <scope>NUCLEOTIDE SEQUENCE [LARGE SCALE GENOMIC DNA]</scope>
    <source>
        <strain>Philadelphia 1 / ATCC 33152 / DSM 7513</strain>
    </source>
</reference>
<reference key="2">
    <citation type="journal article" date="2017" name="Cell Res.">
        <title>A unique deubiquitinase that deconjugates phosphoribosyl-linked protein ubiquitination.</title>
        <authorList>
            <person name="Qiu J."/>
            <person name="Yu K."/>
            <person name="Fei X."/>
            <person name="Liu Y."/>
            <person name="Nakayasu E.S."/>
            <person name="Piehowski P.D."/>
            <person name="Shaw J.B."/>
            <person name="Puvar K."/>
            <person name="Das C."/>
            <person name="Liu X."/>
            <person name="Luo Z.Q."/>
        </authorList>
    </citation>
    <scope>FUNCTION</scope>
</reference>
<reference key="3">
    <citation type="journal article" date="2019" name="Nature">
        <title>Inhibition of bacterial ubiquitin ligases by SidJ-calmodulin catalysed glutamylation.</title>
        <authorList>
            <person name="Bhogaraju S."/>
            <person name="Bonn F."/>
            <person name="Mukherjee R."/>
            <person name="Adams M."/>
            <person name="Pfleiderer M.M."/>
            <person name="Galej W.P."/>
            <person name="Matkovic V."/>
            <person name="Lopez-Mosqueda J."/>
            <person name="Kalayil S."/>
            <person name="Shin D."/>
            <person name="Dikic I."/>
        </authorList>
    </citation>
    <scope>FUNCTION</scope>
    <scope>COFACTOR</scope>
    <scope>CATALYTIC ACTIVITY</scope>
    <scope>INTERACTION WITH HOST CALMODULIN/CMD1</scope>
    <scope>MUTAGENESIS OF ILE-841 AND GLN-842</scope>
</reference>
<reference key="4">
    <citation type="journal article" date="2019" name="Nature">
        <title>Regulation of phosphoribosyl ubiquitination by a calmodulin-dependent glutamylase.</title>
        <authorList>
            <person name="Gan N."/>
            <person name="Zhen X."/>
            <person name="Liu Y."/>
            <person name="Xu X."/>
            <person name="He C."/>
            <person name="Qiu J."/>
            <person name="Liu Y."/>
            <person name="Fujimoto G.M."/>
            <person name="Nakayasu E.S."/>
            <person name="Zhou B."/>
            <person name="Zhao L."/>
            <person name="Puvar K."/>
            <person name="Das C."/>
            <person name="Ouyang S."/>
            <person name="Luo Z.Q."/>
        </authorList>
    </citation>
    <scope>FUNCTION</scope>
    <scope>CATALYTIC ACTIVITY</scope>
    <scope>INTERACTION WITH HOST CALMODULIN</scope>
    <scope>COFACTOR</scope>
</reference>
<reference evidence="7" key="5">
    <citation type="journal article" date="2019" name="Science">
        <title>Bacterial pseudokinase catalyzes protein polyglutamylation to inhibit the SidE-family ubiquitin ligases.</title>
        <authorList>
            <person name="Black M.H."/>
            <person name="Osinski A."/>
            <person name="Gradowski M."/>
            <person name="Servage K.A."/>
            <person name="Pawlowski K."/>
            <person name="Tomchick D.R."/>
            <person name="Tagliabracci V.S."/>
        </authorList>
    </citation>
    <scope>X-RAY CRYSTALLOGRAPHY (2.10 ANGSTROMS) IN COMPLEX WITH CALMODULIN/CMD1</scope>
    <scope>CATALYTIC ACTIVITY</scope>
    <scope>FUNCTION</scope>
</reference>
<protein>
    <recommendedName>
        <fullName evidence="6">Calmodulin-dependent glutamylase SidJ</fullName>
        <ecNumber evidence="3 4 5">6.-.-.-</ecNumber>
    </recommendedName>
</protein>
<accession>Q5ZTK6</accession>